<dbReference type="EC" id="2.7.7.6" evidence="1"/>
<dbReference type="EMBL" id="CP000110">
    <property type="protein sequence ID" value="ABB35807.1"/>
    <property type="molecule type" value="Genomic_DNA"/>
</dbReference>
<dbReference type="RefSeq" id="WP_011365016.1">
    <property type="nucleotide sequence ID" value="NC_007516.1"/>
</dbReference>
<dbReference type="SMR" id="Q3AHX5"/>
<dbReference type="STRING" id="110662.Syncc9605_2067"/>
<dbReference type="KEGG" id="syd:Syncc9605_2067"/>
<dbReference type="eggNOG" id="COG0085">
    <property type="taxonomic scope" value="Bacteria"/>
</dbReference>
<dbReference type="HOGENOM" id="CLU_000524_4_1_3"/>
<dbReference type="OrthoDB" id="9803954at2"/>
<dbReference type="GO" id="GO:0000428">
    <property type="term" value="C:DNA-directed RNA polymerase complex"/>
    <property type="evidence" value="ECO:0007669"/>
    <property type="project" value="UniProtKB-KW"/>
</dbReference>
<dbReference type="GO" id="GO:0003677">
    <property type="term" value="F:DNA binding"/>
    <property type="evidence" value="ECO:0007669"/>
    <property type="project" value="UniProtKB-UniRule"/>
</dbReference>
<dbReference type="GO" id="GO:0003899">
    <property type="term" value="F:DNA-directed RNA polymerase activity"/>
    <property type="evidence" value="ECO:0007669"/>
    <property type="project" value="UniProtKB-UniRule"/>
</dbReference>
<dbReference type="GO" id="GO:0032549">
    <property type="term" value="F:ribonucleoside binding"/>
    <property type="evidence" value="ECO:0007669"/>
    <property type="project" value="InterPro"/>
</dbReference>
<dbReference type="GO" id="GO:0006351">
    <property type="term" value="P:DNA-templated transcription"/>
    <property type="evidence" value="ECO:0007669"/>
    <property type="project" value="UniProtKB-UniRule"/>
</dbReference>
<dbReference type="CDD" id="cd00653">
    <property type="entry name" value="RNA_pol_B_RPB2"/>
    <property type="match status" value="1"/>
</dbReference>
<dbReference type="FunFam" id="3.90.1800.10:FF:000001">
    <property type="entry name" value="DNA-directed RNA polymerase subunit beta"/>
    <property type="match status" value="1"/>
</dbReference>
<dbReference type="Gene3D" id="2.40.50.100">
    <property type="match status" value="1"/>
</dbReference>
<dbReference type="Gene3D" id="2.40.50.150">
    <property type="match status" value="1"/>
</dbReference>
<dbReference type="Gene3D" id="3.90.1100.10">
    <property type="match status" value="1"/>
</dbReference>
<dbReference type="Gene3D" id="2.30.150.10">
    <property type="entry name" value="DNA-directed RNA polymerase, beta subunit, external 1 domain"/>
    <property type="match status" value="1"/>
</dbReference>
<dbReference type="Gene3D" id="2.40.270.10">
    <property type="entry name" value="DNA-directed RNA polymerase, subunit 2, domain 6"/>
    <property type="match status" value="1"/>
</dbReference>
<dbReference type="Gene3D" id="3.90.1800.10">
    <property type="entry name" value="RNA polymerase alpha subunit dimerisation domain"/>
    <property type="match status" value="1"/>
</dbReference>
<dbReference type="Gene3D" id="3.90.1110.10">
    <property type="entry name" value="RNA polymerase Rpb2, domain 2"/>
    <property type="match status" value="1"/>
</dbReference>
<dbReference type="HAMAP" id="MF_01321">
    <property type="entry name" value="RNApol_bact_RpoB"/>
    <property type="match status" value="1"/>
</dbReference>
<dbReference type="InterPro" id="IPR042107">
    <property type="entry name" value="DNA-dir_RNA_pol_bsu_ext_1_sf"/>
</dbReference>
<dbReference type="InterPro" id="IPR019462">
    <property type="entry name" value="DNA-dir_RNA_pol_bsu_external_1"/>
</dbReference>
<dbReference type="InterPro" id="IPR015712">
    <property type="entry name" value="DNA-dir_RNA_pol_su2"/>
</dbReference>
<dbReference type="InterPro" id="IPR007120">
    <property type="entry name" value="DNA-dir_RNAP_su2_dom"/>
</dbReference>
<dbReference type="InterPro" id="IPR037033">
    <property type="entry name" value="DNA-dir_RNAP_su2_hyb_sf"/>
</dbReference>
<dbReference type="InterPro" id="IPR010243">
    <property type="entry name" value="RNA_pol_bsu_bac"/>
</dbReference>
<dbReference type="InterPro" id="IPR007121">
    <property type="entry name" value="RNA_pol_bsu_CS"/>
</dbReference>
<dbReference type="InterPro" id="IPR007644">
    <property type="entry name" value="RNA_pol_bsu_protrusion"/>
</dbReference>
<dbReference type="InterPro" id="IPR007642">
    <property type="entry name" value="RNA_pol_Rpb2_2"/>
</dbReference>
<dbReference type="InterPro" id="IPR037034">
    <property type="entry name" value="RNA_pol_Rpb2_2_sf"/>
</dbReference>
<dbReference type="InterPro" id="IPR007645">
    <property type="entry name" value="RNA_pol_Rpb2_3"/>
</dbReference>
<dbReference type="InterPro" id="IPR007641">
    <property type="entry name" value="RNA_pol_Rpb2_7"/>
</dbReference>
<dbReference type="InterPro" id="IPR014724">
    <property type="entry name" value="RNA_pol_RPB2_OB-fold"/>
</dbReference>
<dbReference type="NCBIfam" id="NF001616">
    <property type="entry name" value="PRK00405.1"/>
    <property type="match status" value="1"/>
</dbReference>
<dbReference type="NCBIfam" id="TIGR02013">
    <property type="entry name" value="rpoB"/>
    <property type="match status" value="1"/>
</dbReference>
<dbReference type="PANTHER" id="PTHR20856">
    <property type="entry name" value="DNA-DIRECTED RNA POLYMERASE I SUBUNIT 2"/>
    <property type="match status" value="1"/>
</dbReference>
<dbReference type="Pfam" id="PF04563">
    <property type="entry name" value="RNA_pol_Rpb2_1"/>
    <property type="match status" value="1"/>
</dbReference>
<dbReference type="Pfam" id="PF04561">
    <property type="entry name" value="RNA_pol_Rpb2_2"/>
    <property type="match status" value="1"/>
</dbReference>
<dbReference type="Pfam" id="PF04565">
    <property type="entry name" value="RNA_pol_Rpb2_3"/>
    <property type="match status" value="1"/>
</dbReference>
<dbReference type="Pfam" id="PF10385">
    <property type="entry name" value="RNA_pol_Rpb2_45"/>
    <property type="match status" value="1"/>
</dbReference>
<dbReference type="Pfam" id="PF00562">
    <property type="entry name" value="RNA_pol_Rpb2_6"/>
    <property type="match status" value="1"/>
</dbReference>
<dbReference type="Pfam" id="PF04560">
    <property type="entry name" value="RNA_pol_Rpb2_7"/>
    <property type="match status" value="1"/>
</dbReference>
<dbReference type="SUPFAM" id="SSF64484">
    <property type="entry name" value="beta and beta-prime subunits of DNA dependent RNA-polymerase"/>
    <property type="match status" value="1"/>
</dbReference>
<dbReference type="PROSITE" id="PS01166">
    <property type="entry name" value="RNA_POL_BETA"/>
    <property type="match status" value="1"/>
</dbReference>
<name>RPOB_SYNSC</name>
<reference key="1">
    <citation type="submission" date="2005-07" db="EMBL/GenBank/DDBJ databases">
        <title>Complete sequence of Synechococcus sp. CC9605.</title>
        <authorList>
            <consortium name="US DOE Joint Genome Institute"/>
            <person name="Copeland A."/>
            <person name="Lucas S."/>
            <person name="Lapidus A."/>
            <person name="Barry K."/>
            <person name="Detter J.C."/>
            <person name="Glavina T."/>
            <person name="Hammon N."/>
            <person name="Israni S."/>
            <person name="Pitluck S."/>
            <person name="Schmutz J."/>
            <person name="Martinez M."/>
            <person name="Larimer F."/>
            <person name="Land M."/>
            <person name="Kyrpides N."/>
            <person name="Ivanova N."/>
            <person name="Richardson P."/>
        </authorList>
    </citation>
    <scope>NUCLEOTIDE SEQUENCE [LARGE SCALE GENOMIC DNA]</scope>
    <source>
        <strain>CC9605</strain>
    </source>
</reference>
<gene>
    <name evidence="1" type="primary">rpoB</name>
    <name type="ordered locus">Syncc9605_2067</name>
</gene>
<comment type="function">
    <text evidence="1">DNA-dependent RNA polymerase catalyzes the transcription of DNA into RNA using the four ribonucleoside triphosphates as substrates.</text>
</comment>
<comment type="catalytic activity">
    <reaction evidence="1">
        <text>RNA(n) + a ribonucleoside 5'-triphosphate = RNA(n+1) + diphosphate</text>
        <dbReference type="Rhea" id="RHEA:21248"/>
        <dbReference type="Rhea" id="RHEA-COMP:14527"/>
        <dbReference type="Rhea" id="RHEA-COMP:17342"/>
        <dbReference type="ChEBI" id="CHEBI:33019"/>
        <dbReference type="ChEBI" id="CHEBI:61557"/>
        <dbReference type="ChEBI" id="CHEBI:140395"/>
        <dbReference type="EC" id="2.7.7.6"/>
    </reaction>
</comment>
<comment type="subunit">
    <text evidence="1">In cyanobacteria the RNAP catalytic core is composed of 2 alpha, 1 beta, 1 beta', 1 gamma and 1 omega subunit. When a sigma factor is associated with the core the holoenzyme is formed, which can initiate transcription.</text>
</comment>
<comment type="similarity">
    <text evidence="1">Belongs to the RNA polymerase beta chain family.</text>
</comment>
<accession>Q3AHX5</accession>
<organism>
    <name type="scientific">Synechococcus sp. (strain CC9605)</name>
    <dbReference type="NCBI Taxonomy" id="110662"/>
    <lineage>
        <taxon>Bacteria</taxon>
        <taxon>Bacillati</taxon>
        <taxon>Cyanobacteriota</taxon>
        <taxon>Cyanophyceae</taxon>
        <taxon>Synechococcales</taxon>
        <taxon>Synechococcaceae</taxon>
        <taxon>Synechococcus</taxon>
    </lineage>
</organism>
<keyword id="KW-0240">DNA-directed RNA polymerase</keyword>
<keyword id="KW-0548">Nucleotidyltransferase</keyword>
<keyword id="KW-0804">Transcription</keyword>
<keyword id="KW-0808">Transferase</keyword>
<proteinExistence type="inferred from homology"/>
<feature type="chain" id="PRO_0000237316" description="DNA-directed RNA polymerase subunit beta">
    <location>
        <begin position="1"/>
        <end position="1097"/>
    </location>
</feature>
<feature type="region of interest" description="Disordered" evidence="2">
    <location>
        <begin position="1072"/>
        <end position="1097"/>
    </location>
</feature>
<sequence length="1097" mass="122559">MSSSAIQVAKTATYLPDLVEVQRASFKWFLDQGLIEELESFSPITDYTGKLELHFIGSEYRLKRPRHDVEEAKRRDATFASQMYVTCRLVNKETGEIKEQEVFIGELPLMTERGTFIINGAERVIVNQIVRSPGVYFKDEMDKNGRRTYNASVIPNRGAWLKFETDKNDLLHVRVDKTRKINAHVLMRAMGLSDNDVLDKLRHPEFYKKSIDAANDEGISSEDQALLELYKKLRPGEPPSVSGGQQLLQTRFFDPKRYDLGRVGRYKINKKLRLTIPDTVRTLTHEDVLSTLDYLINLELDVGGASLDDIDHLGNRRVRSVGELLQNQVRVGLNRLERIIKERMTVGETDSLTPAQLVNPKPLVAAIKEFFGSSQLSQFMDQTNPLAELTHKRRISALGPGGLTRERAGFAVRDIHPSHYGRLCPIETPEGPNAGLINSLATHARVNEYGFIETPFWKVEYGVVLKDGDPIYLSADREDEVRVAPGDVATEDDGRISADLIPVRYRQDFEKVPPEQVDYVALSPVQVISVATSLIPFLEHDDANRALMGSNMQRQAVPLLRPERALVGTGLETQVARDSGMVPISRVNGTVTYVDANAIVVQDEDGNDHTHFLQKYQRSNQDTCLNQRPIVRCGDPVIVGQVMADGSACEGGEIALGQNVLIAYMPWEGYNYEDALLVSERLVTDDLYTSVHIEKYEIEARQTKLGPEEITREIPNVAEESLGNLDEMGIIRVGAFVESGDILVGKVTPKGESDQPPEEKLLRAIFGEKARDVRDNSLRVPGTERGRVVDVRIYTREQGDELPPGANMVVRVYVAQRRKIQVGDKMAGRHGNKGIISRILPREDMPYLPDGTPVDIVLNPLGVPSRMNVGQVFELLMGWAASNLDCRVRIVPFDEMHGAEKSQQTVETFLKEAAKQPGKGWVYDPEDPGKLQLRDGRTGLPFDQPVAVGYSHFLKLVHLVDDKIHARSTGPYSLVTQQPLGGKAQQGGQRLGEMEVWALEAYGAAYTLQELLTVKSDDMQGRNEALNAIVKGKPIPRPGTPESFKVLMRELQSLGLDIAVYTDEGKEVDLMQDVNPRRSTPSRPTYESLGVADYDED</sequence>
<evidence type="ECO:0000255" key="1">
    <source>
        <dbReference type="HAMAP-Rule" id="MF_01321"/>
    </source>
</evidence>
<evidence type="ECO:0000256" key="2">
    <source>
        <dbReference type="SAM" id="MobiDB-lite"/>
    </source>
</evidence>
<protein>
    <recommendedName>
        <fullName evidence="1">DNA-directed RNA polymerase subunit beta</fullName>
        <shortName evidence="1">RNAP subunit beta</shortName>
        <ecNumber evidence="1">2.7.7.6</ecNumber>
    </recommendedName>
    <alternativeName>
        <fullName evidence="1">RNA polymerase subunit beta</fullName>
    </alternativeName>
    <alternativeName>
        <fullName evidence="1">Transcriptase subunit beta</fullName>
    </alternativeName>
</protein>